<sequence>MGQEQGTPWIQSTGHTSTQKEEDGQKIPKLEHRNSTQLMGHYQKTMNQVAMPKQIVY</sequence>
<organism>
    <name type="scientific">Influenza A virus (strain A/USA:Texas/UR06-0195/2007 H1N1)</name>
    <dbReference type="NCBI Taxonomy" id="455880"/>
    <lineage>
        <taxon>Viruses</taxon>
        <taxon>Riboviria</taxon>
        <taxon>Orthornavirae</taxon>
        <taxon>Negarnaviricota</taxon>
        <taxon>Polyploviricotina</taxon>
        <taxon>Insthoviricetes</taxon>
        <taxon>Articulavirales</taxon>
        <taxon>Orthomyxoviridae</taxon>
        <taxon>Alphainfluenzavirus</taxon>
        <taxon>Alphainfluenzavirus influenzae</taxon>
        <taxon>Influenza A virus</taxon>
    </lineage>
</organism>
<comment type="function">
    <text evidence="1">May play an important role in promoting lung pathology in both primary viral infection and secondary bacterial infection.</text>
</comment>
<comment type="subcellular location">
    <subcellularLocation>
        <location evidence="1">Host nucleus</location>
    </subcellularLocation>
    <subcellularLocation>
        <location evidence="1">Host cytoplasm</location>
        <location evidence="1">Host cytosol</location>
    </subcellularLocation>
</comment>
<comment type="miscellaneous">
    <text>Is not encoded in all strains, and seems to be dispensable for replication.</text>
</comment>
<comment type="similarity">
    <text evidence="1">Belongs to the influenza viruses PB1-F2 family.</text>
</comment>
<protein>
    <recommendedName>
        <fullName evidence="1">Protein PB1-F2</fullName>
    </recommendedName>
</protein>
<gene>
    <name evidence="1" type="primary">PB1</name>
    <name type="synonym">PB1-F2</name>
</gene>
<accession>A8C8K3</accession>
<evidence type="ECO:0000255" key="1">
    <source>
        <dbReference type="HAMAP-Rule" id="MF_04064"/>
    </source>
</evidence>
<evidence type="ECO:0000256" key="2">
    <source>
        <dbReference type="SAM" id="MobiDB-lite"/>
    </source>
</evidence>
<dbReference type="EMBL" id="CY026217">
    <property type="protein sequence ID" value="ABV45935.1"/>
    <property type="molecule type" value="Viral_cRNA"/>
</dbReference>
<dbReference type="Proteomes" id="UP001395887">
    <property type="component" value="Genome"/>
</dbReference>
<dbReference type="GO" id="GO:0044164">
    <property type="term" value="C:host cell cytosol"/>
    <property type="evidence" value="ECO:0007669"/>
    <property type="project" value="UniProtKB-SubCell"/>
</dbReference>
<dbReference type="GO" id="GO:0042025">
    <property type="term" value="C:host cell nucleus"/>
    <property type="evidence" value="ECO:0007669"/>
    <property type="project" value="UniProtKB-SubCell"/>
</dbReference>
<dbReference type="GO" id="GO:0016020">
    <property type="term" value="C:membrane"/>
    <property type="evidence" value="ECO:0007669"/>
    <property type="project" value="UniProtKB-UniRule"/>
</dbReference>
<dbReference type="GO" id="GO:0039545">
    <property type="term" value="P:symbiont-mediated suppression of host cytoplasmic pattern recognition receptor signaling pathway via inhibition of MAVS activity"/>
    <property type="evidence" value="ECO:0000250"/>
    <property type="project" value="UniProtKB"/>
</dbReference>
<dbReference type="HAMAP" id="MF_04064">
    <property type="entry name" value="INFV_PB1F2"/>
    <property type="match status" value="1"/>
</dbReference>
<dbReference type="InterPro" id="IPR021045">
    <property type="entry name" value="Flu_proapoptotic_PB1-F2"/>
</dbReference>
<dbReference type="Pfam" id="PF11986">
    <property type="entry name" value="PB1-F2"/>
    <property type="match status" value="1"/>
</dbReference>
<reference key="1">
    <citation type="submission" date="2007-09" db="EMBL/GenBank/DDBJ databases">
        <title>The NIAID influenza genome sequencing project.</title>
        <authorList>
            <person name="Spiro D."/>
            <person name="Sengamalay N."/>
            <person name="Boyne A."/>
            <person name="Bera J."/>
            <person name="Zaborsky J."/>
            <person name="Subbu V."/>
            <person name="Sparenborg J."/>
            <person name="Gallagher T."/>
            <person name="Overton L."/>
            <person name="Althoff R."/>
            <person name="Liu X."/>
            <person name="Ghedin E."/>
            <person name="Sitz J."/>
            <person name="Katzel D."/>
            <person name="Neupane R."/>
            <person name="Shumway M."/>
            <person name="Koo H."/>
            <person name="Edelman L."/>
            <person name="Menegus M."/>
            <person name="Mayer C."/>
            <person name="Dale S."/>
            <person name="Bao Y."/>
            <person name="Bolotov P."/>
            <person name="Dernovoy D."/>
            <person name="Kiryutin B."/>
            <person name="Lipman D.J."/>
            <person name="Tatusova T."/>
        </authorList>
    </citation>
    <scope>NUCLEOTIDE SEQUENCE [GENOMIC RNA]</scope>
</reference>
<reference key="2">
    <citation type="submission" date="2007-09" db="EMBL/GenBank/DDBJ databases">
        <authorList>
            <consortium name="The NIAID Influenza Genome Sequencing Consortium"/>
        </authorList>
    </citation>
    <scope>NUCLEOTIDE SEQUENCE [GENOMIC RNA]</scope>
</reference>
<name>PB1F2_I07A0</name>
<keyword id="KW-1035">Host cytoplasm</keyword>
<keyword id="KW-1048">Host nucleus</keyword>
<proteinExistence type="inferred from homology"/>
<organismHost>
    <name type="scientific">Aves</name>
    <dbReference type="NCBI Taxonomy" id="8782"/>
</organismHost>
<organismHost>
    <name type="scientific">Homo sapiens</name>
    <name type="common">Human</name>
    <dbReference type="NCBI Taxonomy" id="9606"/>
</organismHost>
<organismHost>
    <name type="scientific">Sus scrofa</name>
    <name type="common">Pig</name>
    <dbReference type="NCBI Taxonomy" id="9823"/>
</organismHost>
<feature type="chain" id="PRO_0000373012" description="Protein PB1-F2">
    <location>
        <begin position="1"/>
        <end position="57"/>
    </location>
</feature>
<feature type="region of interest" description="Disordered" evidence="2">
    <location>
        <begin position="1"/>
        <end position="35"/>
    </location>
</feature>
<feature type="compositionally biased region" description="Polar residues" evidence="2">
    <location>
        <begin position="1"/>
        <end position="17"/>
    </location>
</feature>
<feature type="compositionally biased region" description="Basic and acidic residues" evidence="2">
    <location>
        <begin position="18"/>
        <end position="34"/>
    </location>
</feature>